<dbReference type="EMBL" id="AY050568">
    <property type="protein sequence ID" value="AAL12231.1"/>
    <property type="molecule type" value="mRNA"/>
</dbReference>
<dbReference type="RefSeq" id="NP_001076199.1">
    <property type="nucleotide sequence ID" value="NM_001082730.1"/>
</dbReference>
<dbReference type="BMRB" id="Q6YNR6"/>
<dbReference type="SMR" id="Q6YNR6"/>
<dbReference type="FunCoup" id="Q6YNR6">
    <property type="interactions" value="38"/>
</dbReference>
<dbReference type="STRING" id="9986.ENSOCUP00000001267"/>
<dbReference type="PaxDb" id="9986-ENSOCUP00000001267"/>
<dbReference type="ABCD" id="Q6YNR6">
    <property type="antibodies" value="1 sequenced antibody"/>
</dbReference>
<dbReference type="GeneID" id="100009495"/>
<dbReference type="KEGG" id="ocu:100009495"/>
<dbReference type="CTD" id="6285"/>
<dbReference type="eggNOG" id="ENOG502S4HJ">
    <property type="taxonomic scope" value="Eukaryota"/>
</dbReference>
<dbReference type="InParanoid" id="Q6YNR6"/>
<dbReference type="OrthoDB" id="9903855at2759"/>
<dbReference type="Proteomes" id="UP000001811">
    <property type="component" value="Unplaced"/>
</dbReference>
<dbReference type="GO" id="GO:0005737">
    <property type="term" value="C:cytoplasm"/>
    <property type="evidence" value="ECO:0007669"/>
    <property type="project" value="UniProtKB-SubCell"/>
</dbReference>
<dbReference type="GO" id="GO:0005576">
    <property type="term" value="C:extracellular region"/>
    <property type="evidence" value="ECO:0000250"/>
    <property type="project" value="UniProtKB"/>
</dbReference>
<dbReference type="GO" id="GO:0005615">
    <property type="term" value="C:extracellular space"/>
    <property type="evidence" value="ECO:0007669"/>
    <property type="project" value="TreeGrafter"/>
</dbReference>
<dbReference type="GO" id="GO:0005634">
    <property type="term" value="C:nucleus"/>
    <property type="evidence" value="ECO:0007669"/>
    <property type="project" value="UniProtKB-SubCell"/>
</dbReference>
<dbReference type="GO" id="GO:0005509">
    <property type="term" value="F:calcium ion binding"/>
    <property type="evidence" value="ECO:0007669"/>
    <property type="project" value="InterPro"/>
</dbReference>
<dbReference type="GO" id="GO:0048306">
    <property type="term" value="F:calcium-dependent protein binding"/>
    <property type="evidence" value="ECO:0007669"/>
    <property type="project" value="TreeGrafter"/>
</dbReference>
<dbReference type="GO" id="GO:0050786">
    <property type="term" value="F:RAGE receptor binding"/>
    <property type="evidence" value="ECO:0007669"/>
    <property type="project" value="TreeGrafter"/>
</dbReference>
<dbReference type="GO" id="GO:0044548">
    <property type="term" value="F:S100 protein binding"/>
    <property type="evidence" value="ECO:0007669"/>
    <property type="project" value="TreeGrafter"/>
</dbReference>
<dbReference type="GO" id="GO:0008270">
    <property type="term" value="F:zinc ion binding"/>
    <property type="evidence" value="ECO:0007669"/>
    <property type="project" value="InterPro"/>
</dbReference>
<dbReference type="GO" id="GO:1990845">
    <property type="term" value="P:adaptive thermogenesis"/>
    <property type="evidence" value="ECO:0000250"/>
    <property type="project" value="UniProtKB"/>
</dbReference>
<dbReference type="GO" id="GO:0007155">
    <property type="term" value="P:cell adhesion"/>
    <property type="evidence" value="ECO:0007669"/>
    <property type="project" value="UniProtKB-KW"/>
</dbReference>
<dbReference type="GO" id="GO:0043123">
    <property type="term" value="P:positive regulation of canonical NF-kappaB signal transduction"/>
    <property type="evidence" value="ECO:0007669"/>
    <property type="project" value="TreeGrafter"/>
</dbReference>
<dbReference type="GO" id="GO:0008284">
    <property type="term" value="P:positive regulation of cell population proliferation"/>
    <property type="evidence" value="ECO:0007669"/>
    <property type="project" value="TreeGrafter"/>
</dbReference>
<dbReference type="GO" id="GO:0097490">
    <property type="term" value="P:sympathetic neuron projection extension"/>
    <property type="evidence" value="ECO:0000250"/>
    <property type="project" value="UniProtKB"/>
</dbReference>
<dbReference type="CDD" id="cd05027">
    <property type="entry name" value="S-100B"/>
    <property type="match status" value="1"/>
</dbReference>
<dbReference type="FunFam" id="1.10.238.10:FF:000044">
    <property type="entry name" value="Protein S100"/>
    <property type="match status" value="1"/>
</dbReference>
<dbReference type="Gene3D" id="1.10.238.10">
    <property type="entry name" value="EF-hand"/>
    <property type="match status" value="1"/>
</dbReference>
<dbReference type="InterPro" id="IPR011992">
    <property type="entry name" value="EF-hand-dom_pair"/>
</dbReference>
<dbReference type="InterPro" id="IPR018247">
    <property type="entry name" value="EF_Hand_1_Ca_BS"/>
</dbReference>
<dbReference type="InterPro" id="IPR002048">
    <property type="entry name" value="EF_hand_dom"/>
</dbReference>
<dbReference type="InterPro" id="IPR028481">
    <property type="entry name" value="S100-B"/>
</dbReference>
<dbReference type="InterPro" id="IPR001751">
    <property type="entry name" value="S100/CaBP7/8-like_CS"/>
</dbReference>
<dbReference type="InterPro" id="IPR013787">
    <property type="entry name" value="S100_Ca-bd_sub"/>
</dbReference>
<dbReference type="PANTHER" id="PTHR11639:SF134">
    <property type="entry name" value="PROTEIN S100-A1-RELATED"/>
    <property type="match status" value="1"/>
</dbReference>
<dbReference type="PANTHER" id="PTHR11639">
    <property type="entry name" value="S100 CALCIUM-BINDING PROTEIN"/>
    <property type="match status" value="1"/>
</dbReference>
<dbReference type="Pfam" id="PF00036">
    <property type="entry name" value="EF-hand_1"/>
    <property type="match status" value="1"/>
</dbReference>
<dbReference type="Pfam" id="PF01023">
    <property type="entry name" value="S_100"/>
    <property type="match status" value="1"/>
</dbReference>
<dbReference type="SMART" id="SM00054">
    <property type="entry name" value="EFh"/>
    <property type="match status" value="1"/>
</dbReference>
<dbReference type="SMART" id="SM01394">
    <property type="entry name" value="S_100"/>
    <property type="match status" value="1"/>
</dbReference>
<dbReference type="SUPFAM" id="SSF47473">
    <property type="entry name" value="EF-hand"/>
    <property type="match status" value="1"/>
</dbReference>
<dbReference type="PROSITE" id="PS00018">
    <property type="entry name" value="EF_HAND_1"/>
    <property type="match status" value="1"/>
</dbReference>
<dbReference type="PROSITE" id="PS50222">
    <property type="entry name" value="EF_HAND_2"/>
    <property type="match status" value="1"/>
</dbReference>
<dbReference type="PROSITE" id="PS00303">
    <property type="entry name" value="S100_CABP"/>
    <property type="match status" value="1"/>
</dbReference>
<gene>
    <name type="primary">S100B</name>
</gene>
<comment type="function">
    <text evidence="1 2 3 4">Small zinc- and- and calcium-binding protein that is highly expressed in astrocytes and constitutes one of the most abundant soluble proteins in brain. Weakly binds calcium but binds zinc very tightly-distinct binding sites with different affinities exist for both ions on each monomer (By similarity). Physiological concentrations of potassium ion antagonize the binding of both divalent cations, especially affecting high-affinity calcium-binding sites (By similarity). Acts as a neurotrophic factor that promotes astrocytosis and axonal proliferation. Involved in innervation of thermogenic adipose tissue by acting as an adipocyte-derived neurotrophic factor that promotes sympathetic innervation of adipose tissue (By similarity). Binds to and initiates the activation of STK38 by releasing autoinhibitory intramolecular interactions within the kinase (By similarity). Interaction with AGER after myocardial infarction may play a role in myocyte apoptosis by activating ERK1/2 and p53/TP53 signaling (By similarity). Could assist ATAD3A cytoplasmic processing, preventing aggregation and favoring mitochondrial localization. May mediate calcium-dependent regulation on many physiological processes by interacting with other proteins, such as TPR-containing proteins, and modulating their activity (By similarity).</text>
</comment>
<comment type="subunit">
    <text evidence="1 2 3 4">Dimer of either two alpha chains, or two beta chains, or one alpha and one beta chain (By similarity). The S100B dimer binds two molecules of STK38 (By similarity). Interacts with CACYBP in a calcium-dependent manner (By similarity). Interacts with ATAD3A; this interaction probably occurs in the cytosol prior to ATAD3A mitochondrial targeting. Interacts with S100A6. The S100B dimer interacts with two molecules of CAPZA1. Interacts with AGER. Interacts with PPP5C (via TPR repeats); the interaction is calcium-dependent and modulates PPP5C activity. Interacts with TPPP; this interaction inhibits TPPP dimerization (By similarity). Interacts with isoform CLSTN3beta of CLSTN3; interaction promotes secretion (By similarity).</text>
</comment>
<comment type="subcellular location">
    <subcellularLocation>
        <location evidence="2">Cytoplasm</location>
    </subcellularLocation>
    <subcellularLocation>
        <location evidence="2">Nucleus</location>
    </subcellularLocation>
    <subcellularLocation>
        <location evidence="4">Secreted</location>
    </subcellularLocation>
    <text evidence="4">Secretion into the medium is promoted by interaction with isoform CLSTN3beta of CLSTN3.</text>
</comment>
<comment type="similarity">
    <text evidence="6">Belongs to the S-100 family.</text>
</comment>
<accession>Q6YNR6</accession>
<keyword id="KW-0007">Acetylation</keyword>
<keyword id="KW-0106">Calcium</keyword>
<keyword id="KW-0130">Cell adhesion</keyword>
<keyword id="KW-0963">Cytoplasm</keyword>
<keyword id="KW-0479">Metal-binding</keyword>
<keyword id="KW-0539">Nucleus</keyword>
<keyword id="KW-1185">Reference proteome</keyword>
<keyword id="KW-0677">Repeat</keyword>
<keyword id="KW-0964">Secreted</keyword>
<keyword id="KW-0862">Zinc</keyword>
<evidence type="ECO:0000250" key="1">
    <source>
        <dbReference type="UniProtKB" id="P02638"/>
    </source>
</evidence>
<evidence type="ECO:0000250" key="2">
    <source>
        <dbReference type="UniProtKB" id="P04271"/>
    </source>
</evidence>
<evidence type="ECO:0000250" key="3">
    <source>
        <dbReference type="UniProtKB" id="P04631"/>
    </source>
</evidence>
<evidence type="ECO:0000250" key="4">
    <source>
        <dbReference type="UniProtKB" id="P50114"/>
    </source>
</evidence>
<evidence type="ECO:0000255" key="5">
    <source>
        <dbReference type="PROSITE-ProRule" id="PRU00448"/>
    </source>
</evidence>
<evidence type="ECO:0000305" key="6"/>
<name>S100B_RABIT</name>
<reference key="1">
    <citation type="submission" date="2001-08" db="EMBL/GenBank/DDBJ databases">
        <authorList>
            <person name="Qian Z."/>
            <person name="Barmack N.H."/>
        </authorList>
    </citation>
    <scope>NUCLEOTIDE SEQUENCE [MRNA]</scope>
    <source>
        <tissue>Cerebellum</tissue>
    </source>
</reference>
<sequence length="92" mass="10713">MSELEKAMVALIDVFHQYSGREGDKHKLKKSELKELINNELSHFLEEIKEQEVVDKVMETLDNDGDGECDFQEFMAFVAMVTTACHEFFEHE</sequence>
<feature type="initiator methionine" description="Removed" evidence="1">
    <location>
        <position position="1"/>
    </location>
</feature>
<feature type="chain" id="PRO_0000143968" description="Protein S100-B">
    <location>
        <begin position="2"/>
        <end position="92"/>
    </location>
</feature>
<feature type="domain" description="EF-hand 1" evidence="6">
    <location>
        <begin position="13"/>
        <end position="48"/>
    </location>
</feature>
<feature type="domain" description="EF-hand 2" evidence="5">
    <location>
        <begin position="49"/>
        <end position="84"/>
    </location>
</feature>
<feature type="binding site" evidence="2">
    <location>
        <position position="16"/>
    </location>
    <ligand>
        <name>Zn(2+)</name>
        <dbReference type="ChEBI" id="CHEBI:29105"/>
    </ligand>
</feature>
<feature type="binding site" evidence="2">
    <location>
        <position position="19"/>
    </location>
    <ligand>
        <name>Ca(2+)</name>
        <dbReference type="ChEBI" id="CHEBI:29108"/>
        <label>1</label>
        <note>low affinity</note>
    </ligand>
</feature>
<feature type="binding site" evidence="2">
    <location>
        <position position="22"/>
    </location>
    <ligand>
        <name>Ca(2+)</name>
        <dbReference type="ChEBI" id="CHEBI:29108"/>
        <label>1</label>
        <note>low affinity</note>
    </ligand>
</feature>
<feature type="binding site" evidence="2">
    <location>
        <position position="24"/>
    </location>
    <ligand>
        <name>Ca(2+)</name>
        <dbReference type="ChEBI" id="CHEBI:29108"/>
        <label>1</label>
        <note>low affinity</note>
    </ligand>
</feature>
<feature type="binding site" evidence="2">
    <location>
        <position position="26"/>
    </location>
    <ligand>
        <name>Zn(2+)</name>
        <dbReference type="ChEBI" id="CHEBI:29105"/>
    </ligand>
</feature>
<feature type="binding site" evidence="5">
    <location>
        <position position="62"/>
    </location>
    <ligand>
        <name>Ca(2+)</name>
        <dbReference type="ChEBI" id="CHEBI:29108"/>
        <label>2</label>
        <note>high affinity</note>
    </ligand>
</feature>
<feature type="binding site" evidence="5">
    <location>
        <position position="64"/>
    </location>
    <ligand>
        <name>Ca(2+)</name>
        <dbReference type="ChEBI" id="CHEBI:29108"/>
        <label>2</label>
        <note>high affinity</note>
    </ligand>
</feature>
<feature type="binding site" evidence="5">
    <location>
        <position position="66"/>
    </location>
    <ligand>
        <name>Ca(2+)</name>
        <dbReference type="ChEBI" id="CHEBI:29108"/>
        <label>2</label>
        <note>high affinity</note>
    </ligand>
</feature>
<feature type="binding site" evidence="5">
    <location>
        <position position="68"/>
    </location>
    <ligand>
        <name>Ca(2+)</name>
        <dbReference type="ChEBI" id="CHEBI:29108"/>
        <label>2</label>
        <note>high affinity</note>
    </ligand>
</feature>
<feature type="binding site" evidence="5">
    <location>
        <position position="73"/>
    </location>
    <ligand>
        <name>Ca(2+)</name>
        <dbReference type="ChEBI" id="CHEBI:29108"/>
        <label>2</label>
        <note>high affinity</note>
    </ligand>
</feature>
<feature type="binding site" evidence="2">
    <location>
        <position position="86"/>
    </location>
    <ligand>
        <name>Zn(2+)</name>
        <dbReference type="ChEBI" id="CHEBI:29105"/>
    </ligand>
</feature>
<feature type="binding site" evidence="2">
    <location>
        <position position="91"/>
    </location>
    <ligand>
        <name>Zn(2+)</name>
        <dbReference type="ChEBI" id="CHEBI:29105"/>
    </ligand>
</feature>
<feature type="modified residue" description="N-acetylserine" evidence="1">
    <location>
        <position position="2"/>
    </location>
</feature>
<organism>
    <name type="scientific">Oryctolagus cuniculus</name>
    <name type="common">Rabbit</name>
    <dbReference type="NCBI Taxonomy" id="9986"/>
    <lineage>
        <taxon>Eukaryota</taxon>
        <taxon>Metazoa</taxon>
        <taxon>Chordata</taxon>
        <taxon>Craniata</taxon>
        <taxon>Vertebrata</taxon>
        <taxon>Euteleostomi</taxon>
        <taxon>Mammalia</taxon>
        <taxon>Eutheria</taxon>
        <taxon>Euarchontoglires</taxon>
        <taxon>Glires</taxon>
        <taxon>Lagomorpha</taxon>
        <taxon>Leporidae</taxon>
        <taxon>Oryctolagus</taxon>
    </lineage>
</organism>
<protein>
    <recommendedName>
        <fullName>Protein S100-B</fullName>
    </recommendedName>
    <alternativeName>
        <fullName>S-100 protein beta chain</fullName>
    </alternativeName>
    <alternativeName>
        <fullName>S-100 protein subunit beta</fullName>
    </alternativeName>
    <alternativeName>
        <fullName>S100 calcium-binding protein B</fullName>
    </alternativeName>
</protein>
<proteinExistence type="inferred from homology"/>